<reference key="1">
    <citation type="journal article" date="2002" name="Nature">
        <title>The genome sequence of Schizosaccharomyces pombe.</title>
        <authorList>
            <person name="Wood V."/>
            <person name="Gwilliam R."/>
            <person name="Rajandream M.A."/>
            <person name="Lyne M.H."/>
            <person name="Lyne R."/>
            <person name="Stewart A."/>
            <person name="Sgouros J.G."/>
            <person name="Peat N."/>
            <person name="Hayles J."/>
            <person name="Baker S.G."/>
            <person name="Basham D."/>
            <person name="Bowman S."/>
            <person name="Brooks K."/>
            <person name="Brown D."/>
            <person name="Brown S."/>
            <person name="Chillingworth T."/>
            <person name="Churcher C.M."/>
            <person name="Collins M."/>
            <person name="Connor R."/>
            <person name="Cronin A."/>
            <person name="Davis P."/>
            <person name="Feltwell T."/>
            <person name="Fraser A."/>
            <person name="Gentles S."/>
            <person name="Goble A."/>
            <person name="Hamlin N."/>
            <person name="Harris D.E."/>
            <person name="Hidalgo J."/>
            <person name="Hodgson G."/>
            <person name="Holroyd S."/>
            <person name="Hornsby T."/>
            <person name="Howarth S."/>
            <person name="Huckle E.J."/>
            <person name="Hunt S."/>
            <person name="Jagels K."/>
            <person name="James K.D."/>
            <person name="Jones L."/>
            <person name="Jones M."/>
            <person name="Leather S."/>
            <person name="McDonald S."/>
            <person name="McLean J."/>
            <person name="Mooney P."/>
            <person name="Moule S."/>
            <person name="Mungall K.L."/>
            <person name="Murphy L.D."/>
            <person name="Niblett D."/>
            <person name="Odell C."/>
            <person name="Oliver K."/>
            <person name="O'Neil S."/>
            <person name="Pearson D."/>
            <person name="Quail M.A."/>
            <person name="Rabbinowitsch E."/>
            <person name="Rutherford K.M."/>
            <person name="Rutter S."/>
            <person name="Saunders D."/>
            <person name="Seeger K."/>
            <person name="Sharp S."/>
            <person name="Skelton J."/>
            <person name="Simmonds M.N."/>
            <person name="Squares R."/>
            <person name="Squares S."/>
            <person name="Stevens K."/>
            <person name="Taylor K."/>
            <person name="Taylor R.G."/>
            <person name="Tivey A."/>
            <person name="Walsh S.V."/>
            <person name="Warren T."/>
            <person name="Whitehead S."/>
            <person name="Woodward J.R."/>
            <person name="Volckaert G."/>
            <person name="Aert R."/>
            <person name="Robben J."/>
            <person name="Grymonprez B."/>
            <person name="Weltjens I."/>
            <person name="Vanstreels E."/>
            <person name="Rieger M."/>
            <person name="Schaefer M."/>
            <person name="Mueller-Auer S."/>
            <person name="Gabel C."/>
            <person name="Fuchs M."/>
            <person name="Duesterhoeft A."/>
            <person name="Fritzc C."/>
            <person name="Holzer E."/>
            <person name="Moestl D."/>
            <person name="Hilbert H."/>
            <person name="Borzym K."/>
            <person name="Langer I."/>
            <person name="Beck A."/>
            <person name="Lehrach H."/>
            <person name="Reinhardt R."/>
            <person name="Pohl T.M."/>
            <person name="Eger P."/>
            <person name="Zimmermann W."/>
            <person name="Wedler H."/>
            <person name="Wambutt R."/>
            <person name="Purnelle B."/>
            <person name="Goffeau A."/>
            <person name="Cadieu E."/>
            <person name="Dreano S."/>
            <person name="Gloux S."/>
            <person name="Lelaure V."/>
            <person name="Mottier S."/>
            <person name="Galibert F."/>
            <person name="Aves S.J."/>
            <person name="Xiang Z."/>
            <person name="Hunt C."/>
            <person name="Moore K."/>
            <person name="Hurst S.M."/>
            <person name="Lucas M."/>
            <person name="Rochet M."/>
            <person name="Gaillardin C."/>
            <person name="Tallada V.A."/>
            <person name="Garzon A."/>
            <person name="Thode G."/>
            <person name="Daga R.R."/>
            <person name="Cruzado L."/>
            <person name="Jimenez J."/>
            <person name="Sanchez M."/>
            <person name="del Rey F."/>
            <person name="Benito J."/>
            <person name="Dominguez A."/>
            <person name="Revuelta J.L."/>
            <person name="Moreno S."/>
            <person name="Armstrong J."/>
            <person name="Forsburg S.L."/>
            <person name="Cerutti L."/>
            <person name="Lowe T."/>
            <person name="McCombie W.R."/>
            <person name="Paulsen I."/>
            <person name="Potashkin J."/>
            <person name="Shpakovski G.V."/>
            <person name="Ussery D."/>
            <person name="Barrell B.G."/>
            <person name="Nurse P."/>
        </authorList>
    </citation>
    <scope>NUCLEOTIDE SEQUENCE [LARGE SCALE GENOMIC DNA]</scope>
    <source>
        <strain>972 / ATCC 24843</strain>
    </source>
</reference>
<reference key="2">
    <citation type="journal article" date="2006" name="Nat. Biotechnol.">
        <title>ORFeome cloning and global analysis of protein localization in the fission yeast Schizosaccharomyces pombe.</title>
        <authorList>
            <person name="Matsuyama A."/>
            <person name="Arai R."/>
            <person name="Yashiroda Y."/>
            <person name="Shirai A."/>
            <person name="Kamata A."/>
            <person name="Sekido S."/>
            <person name="Kobayashi Y."/>
            <person name="Hashimoto A."/>
            <person name="Hamamoto M."/>
            <person name="Hiraoka Y."/>
            <person name="Horinouchi S."/>
            <person name="Yoshida M."/>
        </authorList>
    </citation>
    <scope>SUBCELLULAR LOCATION [LARGE SCALE ANALYSIS]</scope>
</reference>
<name>YGSA_SCHPO</name>
<dbReference type="EC" id="3.6.4.-"/>
<dbReference type="EMBL" id="CU329671">
    <property type="protein sequence ID" value="CAA22438.1"/>
    <property type="molecule type" value="Genomic_DNA"/>
</dbReference>
<dbReference type="PIR" id="T40065">
    <property type="entry name" value="T40065"/>
</dbReference>
<dbReference type="SMR" id="O94387"/>
<dbReference type="BioGRID" id="277051">
    <property type="interactions" value="38"/>
</dbReference>
<dbReference type="FunCoup" id="O94387">
    <property type="interactions" value="113"/>
</dbReference>
<dbReference type="STRING" id="284812.O94387"/>
<dbReference type="iPTMnet" id="O94387"/>
<dbReference type="PaxDb" id="4896-SPBC29A10.10c.1"/>
<dbReference type="EnsemblFungi" id="SPBC29A10.10c.1">
    <property type="protein sequence ID" value="SPBC29A10.10c.1:pep"/>
    <property type="gene ID" value="SPBC29A10.10c"/>
</dbReference>
<dbReference type="KEGG" id="spo:2540523"/>
<dbReference type="PomBase" id="SPBC29A10.10c"/>
<dbReference type="VEuPathDB" id="FungiDB:SPBC29A10.10c"/>
<dbReference type="eggNOG" id="KOG1801">
    <property type="taxonomic scope" value="Eukaryota"/>
</dbReference>
<dbReference type="HOGENOM" id="CLU_000459_2_0_1"/>
<dbReference type="InParanoid" id="O94387"/>
<dbReference type="OMA" id="PWHQSEL"/>
<dbReference type="PhylomeDB" id="O94387"/>
<dbReference type="PRO" id="PR:O94387"/>
<dbReference type="Proteomes" id="UP000002485">
    <property type="component" value="Chromosome II"/>
</dbReference>
<dbReference type="GO" id="GO:0000785">
    <property type="term" value="C:chromatin"/>
    <property type="evidence" value="ECO:0000314"/>
    <property type="project" value="PomBase"/>
</dbReference>
<dbReference type="GO" id="GO:0016604">
    <property type="term" value="C:nuclear body"/>
    <property type="evidence" value="ECO:0000318"/>
    <property type="project" value="GO_Central"/>
</dbReference>
<dbReference type="GO" id="GO:0030874">
    <property type="term" value="C:nucleolar chromatin"/>
    <property type="evidence" value="ECO:0000314"/>
    <property type="project" value="PomBase"/>
</dbReference>
<dbReference type="GO" id="GO:0005634">
    <property type="term" value="C:nucleus"/>
    <property type="evidence" value="ECO:0007005"/>
    <property type="project" value="PomBase"/>
</dbReference>
<dbReference type="GO" id="GO:0035861">
    <property type="term" value="C:site of double-strand break"/>
    <property type="evidence" value="ECO:0000314"/>
    <property type="project" value="PomBase"/>
</dbReference>
<dbReference type="GO" id="GO:0005524">
    <property type="term" value="F:ATP binding"/>
    <property type="evidence" value="ECO:0007669"/>
    <property type="project" value="UniProtKB-KW"/>
</dbReference>
<dbReference type="GO" id="GO:0016887">
    <property type="term" value="F:ATP hydrolysis activity"/>
    <property type="evidence" value="ECO:0000305"/>
    <property type="project" value="PomBase"/>
</dbReference>
<dbReference type="GO" id="GO:0003723">
    <property type="term" value="F:RNA binding"/>
    <property type="evidence" value="ECO:0000318"/>
    <property type="project" value="GO_Central"/>
</dbReference>
<dbReference type="GO" id="GO:0003724">
    <property type="term" value="F:RNA helicase activity"/>
    <property type="evidence" value="ECO:0000266"/>
    <property type="project" value="PomBase"/>
</dbReference>
<dbReference type="GO" id="GO:0001147">
    <property type="term" value="F:transcription termination site sequence-specific DNA binding"/>
    <property type="evidence" value="ECO:0000318"/>
    <property type="project" value="GO_Central"/>
</dbReference>
<dbReference type="GO" id="GO:0031123">
    <property type="term" value="P:RNA 3'-end processing"/>
    <property type="evidence" value="ECO:0000266"/>
    <property type="project" value="PomBase"/>
</dbReference>
<dbReference type="GO" id="GO:0006369">
    <property type="term" value="P:termination of RNA polymerase II transcription"/>
    <property type="evidence" value="ECO:0000318"/>
    <property type="project" value="GO_Central"/>
</dbReference>
<dbReference type="GO" id="GO:0006399">
    <property type="term" value="P:tRNA metabolic process"/>
    <property type="evidence" value="ECO:0000303"/>
    <property type="project" value="PomBase"/>
</dbReference>
<dbReference type="CDD" id="cd18042">
    <property type="entry name" value="DEXXQc_SETX"/>
    <property type="match status" value="1"/>
</dbReference>
<dbReference type="CDD" id="cd18808">
    <property type="entry name" value="SF1_C_Upf1"/>
    <property type="match status" value="1"/>
</dbReference>
<dbReference type="FunFam" id="3.40.50.300:FF:000326">
    <property type="entry name" value="P-loop containing nucleoside triphosphate hydrolase"/>
    <property type="match status" value="1"/>
</dbReference>
<dbReference type="FunFam" id="3.40.50.300:FF:001152">
    <property type="entry name" value="tRNA-splicing endonuclease, putative"/>
    <property type="match status" value="1"/>
</dbReference>
<dbReference type="Gene3D" id="3.40.50.300">
    <property type="entry name" value="P-loop containing nucleotide triphosphate hydrolases"/>
    <property type="match status" value="2"/>
</dbReference>
<dbReference type="InterPro" id="IPR016024">
    <property type="entry name" value="ARM-type_fold"/>
</dbReference>
<dbReference type="InterPro" id="IPR045055">
    <property type="entry name" value="DNA2/NAM7-like"/>
</dbReference>
<dbReference type="InterPro" id="IPR041679">
    <property type="entry name" value="DNA2/NAM7-like_C"/>
</dbReference>
<dbReference type="InterPro" id="IPR041677">
    <property type="entry name" value="DNA2/NAM7_AAA_11"/>
</dbReference>
<dbReference type="InterPro" id="IPR024481">
    <property type="entry name" value="Helicase_Sen1_N"/>
</dbReference>
<dbReference type="InterPro" id="IPR027417">
    <property type="entry name" value="P-loop_NTPase"/>
</dbReference>
<dbReference type="InterPro" id="IPR056474">
    <property type="entry name" value="SEN1_barrel"/>
</dbReference>
<dbReference type="InterPro" id="IPR047187">
    <property type="entry name" value="SF1_C_Upf1"/>
</dbReference>
<dbReference type="PANTHER" id="PTHR10887">
    <property type="entry name" value="DNA2/NAM7 HELICASE FAMILY"/>
    <property type="match status" value="1"/>
</dbReference>
<dbReference type="PANTHER" id="PTHR10887:SF495">
    <property type="entry name" value="HELICASE SENATAXIN ISOFORM X1-RELATED"/>
    <property type="match status" value="1"/>
</dbReference>
<dbReference type="Pfam" id="PF13086">
    <property type="entry name" value="AAA_11"/>
    <property type="match status" value="1"/>
</dbReference>
<dbReference type="Pfam" id="PF13087">
    <property type="entry name" value="AAA_12"/>
    <property type="match status" value="1"/>
</dbReference>
<dbReference type="Pfam" id="PF23576">
    <property type="entry name" value="SEN1_barrel"/>
    <property type="match status" value="1"/>
</dbReference>
<dbReference type="Pfam" id="PF12726">
    <property type="entry name" value="SEN1_N"/>
    <property type="match status" value="1"/>
</dbReference>
<dbReference type="SUPFAM" id="SSF48371">
    <property type="entry name" value="ARM repeat"/>
    <property type="match status" value="1"/>
</dbReference>
<dbReference type="SUPFAM" id="SSF52540">
    <property type="entry name" value="P-loop containing nucleoside triphosphate hydrolases"/>
    <property type="match status" value="1"/>
</dbReference>
<keyword id="KW-0067">ATP-binding</keyword>
<keyword id="KW-0347">Helicase</keyword>
<keyword id="KW-0378">Hydrolase</keyword>
<keyword id="KW-0547">Nucleotide-binding</keyword>
<keyword id="KW-0539">Nucleus</keyword>
<keyword id="KW-1185">Reference proteome</keyword>
<evidence type="ECO:0000250" key="1"/>
<evidence type="ECO:0000256" key="2">
    <source>
        <dbReference type="SAM" id="MobiDB-lite"/>
    </source>
</evidence>
<evidence type="ECO:0000269" key="3">
    <source>
    </source>
</evidence>
<evidence type="ECO:0000305" key="4"/>
<feature type="chain" id="PRO_0000350747" description="Uncharacterized ATP-dependent helicase C29A10.10c">
    <location>
        <begin position="1"/>
        <end position="1944"/>
    </location>
</feature>
<feature type="region of interest" description="Disordered" evidence="2">
    <location>
        <begin position="908"/>
        <end position="999"/>
    </location>
</feature>
<feature type="region of interest" description="Disordered" evidence="2">
    <location>
        <begin position="1824"/>
        <end position="1944"/>
    </location>
</feature>
<feature type="compositionally biased region" description="Basic and acidic residues" evidence="2">
    <location>
        <begin position="916"/>
        <end position="929"/>
    </location>
</feature>
<feature type="compositionally biased region" description="Basic and acidic residues" evidence="2">
    <location>
        <begin position="939"/>
        <end position="949"/>
    </location>
</feature>
<feature type="compositionally biased region" description="Acidic residues" evidence="2">
    <location>
        <begin position="985"/>
        <end position="996"/>
    </location>
</feature>
<feature type="compositionally biased region" description="Basic and acidic residues" evidence="2">
    <location>
        <begin position="1843"/>
        <end position="1852"/>
    </location>
</feature>
<feature type="compositionally biased region" description="Basic and acidic residues" evidence="2">
    <location>
        <begin position="1869"/>
        <end position="1891"/>
    </location>
</feature>
<feature type="compositionally biased region" description="Basic residues" evidence="2">
    <location>
        <begin position="1912"/>
        <end position="1922"/>
    </location>
</feature>
<feature type="binding site" evidence="1">
    <location>
        <begin position="1293"/>
        <end position="1300"/>
    </location>
    <ligand>
        <name>ATP</name>
        <dbReference type="ChEBI" id="CHEBI:30616"/>
    </ligand>
</feature>
<protein>
    <recommendedName>
        <fullName>Uncharacterized ATP-dependent helicase C29A10.10c</fullName>
        <ecNumber>3.6.4.-</ecNumber>
    </recommendedName>
</protein>
<proteinExistence type="inferred from homology"/>
<sequence length="1944" mass="222211">MENDEAFDRLIRKIQENQKHPSFEGSNKVLHLALSYLNTNRQNPHWVCDPKLQVAVRECLFLFSFQNDNEYLVWFKKHLNERLQLCPKCIVKYHQSLDDFKSLCLNIFHFDPNTLEIVMEKIYSWDIFRLQEVLKTVPKIDTSSASKPILCAFYEILYSPRILHNKEIFPLFRNRFLESGFLRLSKNLVPGVISLLFSRDDELRRWACSILSDVKTISDNEFKILEGPLLQEIRSLDQKKENENEMQIFLKGLSLLLKHVDHLYFRGLTGKNFNVADFILSGLQSDHTNLCPSFLVCLHSLLYCYGRNFWTPEISPSEVIDKIFNGNAYKRWTEENTSNFSNDQKAENPFEWATSLLKTISIIDEVELINKILINYTMQYKKELEVGFKNVQLLQSLADIFSVLFSEYFMIFPHSDQSLQNKVFELHSTLAIKFDELFRLLNLENEESVEWRLIKKVFEYRLNLDLYILKQFYCHYLDRNRKPPLNIKSVSESFKNFWVYLQNVFREEKFFMVRIVFRACSTVCLIDKLPPKKVDIPFKSDFENALNGFVATFSEMLIQTQCWHLSAQTQLVSNPLTFRGIFSLVFSPILEISTGSISIIKSISLSDSVVDTIGELLRSQFSNTLNSSCYVLLQWLKVRNFGGAKHIVYFNKLIINTIFDSVDGLTSKDATFAKQVEKKESLKNFWESLWKFFTHFFIVLPTWPVHDKDNLVDLMRDTLDFCDMLINIFEEVNGFIFGLSDNDIKIVSANDKGSALAMCIADSLVTVSYWLKLTDSSLLTSVVKVICKMLKICKKLECPISQNVIDIIHRASITSDEQTILTFTEREDLFISLTPYLSEDVLNHSPFNDTNTLETKLQSDDRGLLSKDQTIGIAKKLPESNISTSNHFLLPPKAISASKAINRNAQKSQNLNFLKSKQETTQRIRESAKVPRTSAGNHLSEKLNSDNHIPKALQKLDSADPIRKPSLLHTSKSYSNPDDKNTSTSDEDTSESEEESSNGLFSLAREANSHASKSLPQRRQIQFLDFDSLKTKNVVHPTQLRRNTQQSAQLARLRLNPDVQEFYKVILGWNPLADSFSASNVEMQCVQAKFTYNDSNAYEKVFKPMLFHECWAQVKSAVEEKQYPPIDLILNTRSTVDNFVDIYFTSCSPTEVSFLSDTDICLLSKSQSSGDTNNPKSFQLCKIQSISRKKESLELCLRMNIESIDLQEYAPNIRFTAQKLFNATTSLREFAALKSLRHLPLSQRILDANVTRLPSNFTDDKKQKIMKSYGVNEPQAYAIYASSVNDGFTLIQGPPGTGKTKTILGMIGAVLTSSSQGLQFNVPGQTRKTSKNKILICAPSNAAIDEILLRIKAGVYDHEGIKFFPKVIRVGFGDSISVHAKEFTLEEQMIKQMELTNLKKDQEANNSSDTRKKYDSIIKKRDSLREDLEKFRSTGKNSSILEAQLREITKQKNMLEQSLDDMRERQRSTNRNLDVLKKQIQNQLLQEADIVCATLSASGHELLLNAGLTFRTVIIDEAAQAVELSSIIPLKYGCESCVMVGDPNQLPPTVLSKTSAKFGYSQSLYVRMFKQHNESACLLSIQYRMNPEISRFPSKFFYNSKLLDGPNMSAVTSRPWHEDPQLGIYRFFNVHGTEAFSNSKSLYNVEEASFILLLYERLIQCYLNIDFEGKIGVVTPYRSQVQQLRSQFQRKYGSIIFKHLDIHTVDGFQGQEKDIIIFSCVRSSMSGGIGFLQDLRRLNVALTRAKSSLYIVGNSKPLMQEDIFYSLIEDAKTRGVWRDLSANQFKNSKSISNVSTHLASNNLNLASRDTPIKSPSVGICEEKQEAHKVKKRHNIDSANLSRGTERDEDIPNKRAKNKVSTDQTAADNKVTKPRLDESSSSKQDVLNKIDESEIEQASSKKPGYVEKNKDKGHMKKSKKPKSKLALAAMAHGFAPPKVEHFKRK</sequence>
<accession>O94387</accession>
<gene>
    <name type="ORF">SPBC29A10.10c</name>
</gene>
<organism>
    <name type="scientific">Schizosaccharomyces pombe (strain 972 / ATCC 24843)</name>
    <name type="common">Fission yeast</name>
    <dbReference type="NCBI Taxonomy" id="284812"/>
    <lineage>
        <taxon>Eukaryota</taxon>
        <taxon>Fungi</taxon>
        <taxon>Dikarya</taxon>
        <taxon>Ascomycota</taxon>
        <taxon>Taphrinomycotina</taxon>
        <taxon>Schizosaccharomycetes</taxon>
        <taxon>Schizosaccharomycetales</taxon>
        <taxon>Schizosaccharomycetaceae</taxon>
        <taxon>Schizosaccharomyces</taxon>
    </lineage>
</organism>
<comment type="subcellular location">
    <subcellularLocation>
        <location evidence="3">Nucleus</location>
    </subcellularLocation>
</comment>
<comment type="similarity">
    <text evidence="4">Belongs to the DNA2/NAM7 helicase family.</text>
</comment>